<gene>
    <name evidence="1" type="primary">phnC</name>
    <name type="ordered locus">Ldb0203</name>
</gene>
<comment type="function">
    <text evidence="1">Part of the ABC transporter complex PhnCDE involved in phosphonates import. Responsible for energy coupling to the transport system.</text>
</comment>
<comment type="catalytic activity">
    <reaction evidence="1">
        <text>phosphonate(out) + ATP + H2O = phosphonate(in) + ADP + phosphate + H(+)</text>
        <dbReference type="Rhea" id="RHEA:18065"/>
        <dbReference type="ChEBI" id="CHEBI:15377"/>
        <dbReference type="ChEBI" id="CHEBI:15378"/>
        <dbReference type="ChEBI" id="CHEBI:16215"/>
        <dbReference type="ChEBI" id="CHEBI:30616"/>
        <dbReference type="ChEBI" id="CHEBI:43474"/>
        <dbReference type="ChEBI" id="CHEBI:456216"/>
        <dbReference type="EC" id="7.3.2.2"/>
    </reaction>
</comment>
<comment type="subunit">
    <text evidence="1">The complex is composed of two ATP-binding proteins (PhnC), two transmembrane proteins (PhnE) and a solute-binding protein (PhnD).</text>
</comment>
<comment type="subcellular location">
    <subcellularLocation>
        <location evidence="1">Cell membrane</location>
        <topology evidence="1">Peripheral membrane protein</topology>
    </subcellularLocation>
</comment>
<comment type="similarity">
    <text evidence="1">Belongs to the ABC transporter superfamily. Phosphonates importer (TC 3.A.1.9.1) family.</text>
</comment>
<sequence>MADQPMIEMKNVTKVYDNGTVGLKNINLKINKGEFVVIVGLSGAGKSTLLRAINRLHDISEGDILIAGESITKTKGKNLRLMRRKIGMIFQSFNLVKRSSVLRNVSAGRLAYYPTWKTTFNLFTDEDKQRAYEALQSVGMAEKVYSRADELSGGQQQRVAIARVLTQRPEIILADEPTASLDPKTSRQVMEDLKMLNEKFDMTVVANLHSIELAKEFGHRVIGVRAGEIVYDGKMEDTPQSVFDNIYNGGKGKEED</sequence>
<evidence type="ECO:0000255" key="1">
    <source>
        <dbReference type="HAMAP-Rule" id="MF_01713"/>
    </source>
</evidence>
<organism>
    <name type="scientific">Lactobacillus delbrueckii subsp. bulgaricus (strain ATCC 11842 / DSM 20081 / BCRC 10696 / JCM 1002 / NBRC 13953 / NCIMB 11778 / NCTC 12712 / WDCM 00102 / Lb 14)</name>
    <dbReference type="NCBI Taxonomy" id="390333"/>
    <lineage>
        <taxon>Bacteria</taxon>
        <taxon>Bacillati</taxon>
        <taxon>Bacillota</taxon>
        <taxon>Bacilli</taxon>
        <taxon>Lactobacillales</taxon>
        <taxon>Lactobacillaceae</taxon>
        <taxon>Lactobacillus</taxon>
    </lineage>
</organism>
<name>PHNC_LACDA</name>
<protein>
    <recommendedName>
        <fullName evidence="1">Phosphonates import ATP-binding protein PhnC</fullName>
        <ecNumber evidence="1">7.3.2.2</ecNumber>
    </recommendedName>
</protein>
<feature type="chain" id="PRO_0000274717" description="Phosphonates import ATP-binding protein PhnC">
    <location>
        <begin position="1"/>
        <end position="256"/>
    </location>
</feature>
<feature type="domain" description="ABC transporter" evidence="1">
    <location>
        <begin position="7"/>
        <end position="251"/>
    </location>
</feature>
<feature type="binding site" evidence="1">
    <location>
        <begin position="40"/>
        <end position="47"/>
    </location>
    <ligand>
        <name>ATP</name>
        <dbReference type="ChEBI" id="CHEBI:30616"/>
    </ligand>
</feature>
<keyword id="KW-0067">ATP-binding</keyword>
<keyword id="KW-1003">Cell membrane</keyword>
<keyword id="KW-0472">Membrane</keyword>
<keyword id="KW-0547">Nucleotide-binding</keyword>
<keyword id="KW-0918">Phosphonate transport</keyword>
<keyword id="KW-1185">Reference proteome</keyword>
<keyword id="KW-1278">Translocase</keyword>
<keyword id="KW-0813">Transport</keyword>
<reference key="1">
    <citation type="journal article" date="2006" name="Proc. Natl. Acad. Sci. U.S.A.">
        <title>The complete genome sequence of Lactobacillus bulgaricus reveals extensive and ongoing reductive evolution.</title>
        <authorList>
            <person name="van de Guchte M."/>
            <person name="Penaud S."/>
            <person name="Grimaldi C."/>
            <person name="Barbe V."/>
            <person name="Bryson K."/>
            <person name="Nicolas P."/>
            <person name="Robert C."/>
            <person name="Oztas S."/>
            <person name="Mangenot S."/>
            <person name="Couloux A."/>
            <person name="Loux V."/>
            <person name="Dervyn R."/>
            <person name="Bossy R."/>
            <person name="Bolotin A."/>
            <person name="Batto J.-M."/>
            <person name="Walunas T."/>
            <person name="Gibrat J.-F."/>
            <person name="Bessieres P."/>
            <person name="Weissenbach J."/>
            <person name="Ehrlich S.D."/>
            <person name="Maguin E."/>
        </authorList>
    </citation>
    <scope>NUCLEOTIDE SEQUENCE [LARGE SCALE GENOMIC DNA]</scope>
    <source>
        <strain>ATCC 11842 / DSM 20081 / BCRC 10696 / JCM 1002 / NBRC 13953 / NCIMB 11778 / NCTC 12712 / WDCM 00102 / Lb 14</strain>
    </source>
</reference>
<proteinExistence type="inferred from homology"/>
<accession>Q1GC08</accession>
<dbReference type="EC" id="7.3.2.2" evidence="1"/>
<dbReference type="EMBL" id="CR954253">
    <property type="protein sequence ID" value="CAI97043.1"/>
    <property type="molecule type" value="Genomic_DNA"/>
</dbReference>
<dbReference type="RefSeq" id="WP_011543556.1">
    <property type="nucleotide sequence ID" value="NC_008054.1"/>
</dbReference>
<dbReference type="SMR" id="Q1GC08"/>
<dbReference type="STRING" id="390333.Ldb0203"/>
<dbReference type="KEGG" id="ldb:Ldb0203"/>
<dbReference type="PATRIC" id="fig|390333.13.peg.1273"/>
<dbReference type="eggNOG" id="COG3638">
    <property type="taxonomic scope" value="Bacteria"/>
</dbReference>
<dbReference type="HOGENOM" id="CLU_000604_1_22_9"/>
<dbReference type="BioCyc" id="LDEL390333:LDB_RS00850-MONOMER"/>
<dbReference type="Proteomes" id="UP000001259">
    <property type="component" value="Chromosome"/>
</dbReference>
<dbReference type="GO" id="GO:0005886">
    <property type="term" value="C:plasma membrane"/>
    <property type="evidence" value="ECO:0007669"/>
    <property type="project" value="UniProtKB-SubCell"/>
</dbReference>
<dbReference type="GO" id="GO:0015416">
    <property type="term" value="F:ABC-type phosphonate transporter activity"/>
    <property type="evidence" value="ECO:0007669"/>
    <property type="project" value="UniProtKB-EC"/>
</dbReference>
<dbReference type="GO" id="GO:0005524">
    <property type="term" value="F:ATP binding"/>
    <property type="evidence" value="ECO:0007669"/>
    <property type="project" value="UniProtKB-KW"/>
</dbReference>
<dbReference type="GO" id="GO:0016887">
    <property type="term" value="F:ATP hydrolysis activity"/>
    <property type="evidence" value="ECO:0007669"/>
    <property type="project" value="InterPro"/>
</dbReference>
<dbReference type="CDD" id="cd03256">
    <property type="entry name" value="ABC_PhnC_transporter"/>
    <property type="match status" value="1"/>
</dbReference>
<dbReference type="Gene3D" id="3.40.50.300">
    <property type="entry name" value="P-loop containing nucleotide triphosphate hydrolases"/>
    <property type="match status" value="1"/>
</dbReference>
<dbReference type="InterPro" id="IPR003593">
    <property type="entry name" value="AAA+_ATPase"/>
</dbReference>
<dbReference type="InterPro" id="IPR003439">
    <property type="entry name" value="ABC_transporter-like_ATP-bd"/>
</dbReference>
<dbReference type="InterPro" id="IPR017871">
    <property type="entry name" value="ABC_transporter-like_CS"/>
</dbReference>
<dbReference type="InterPro" id="IPR012693">
    <property type="entry name" value="ABC_transpr_PhnC"/>
</dbReference>
<dbReference type="InterPro" id="IPR050086">
    <property type="entry name" value="MetN_ABC_transporter-like"/>
</dbReference>
<dbReference type="InterPro" id="IPR027417">
    <property type="entry name" value="P-loop_NTPase"/>
</dbReference>
<dbReference type="NCBIfam" id="TIGR02315">
    <property type="entry name" value="ABC_phnC"/>
    <property type="match status" value="1"/>
</dbReference>
<dbReference type="PANTHER" id="PTHR43166">
    <property type="entry name" value="AMINO ACID IMPORT ATP-BINDING PROTEIN"/>
    <property type="match status" value="1"/>
</dbReference>
<dbReference type="PANTHER" id="PTHR43166:SF6">
    <property type="entry name" value="PHOSPHONATES IMPORT ATP-BINDING PROTEIN PHNC"/>
    <property type="match status" value="1"/>
</dbReference>
<dbReference type="Pfam" id="PF00005">
    <property type="entry name" value="ABC_tran"/>
    <property type="match status" value="1"/>
</dbReference>
<dbReference type="SMART" id="SM00382">
    <property type="entry name" value="AAA"/>
    <property type="match status" value="1"/>
</dbReference>
<dbReference type="SUPFAM" id="SSF52540">
    <property type="entry name" value="P-loop containing nucleoside triphosphate hydrolases"/>
    <property type="match status" value="1"/>
</dbReference>
<dbReference type="PROSITE" id="PS00211">
    <property type="entry name" value="ABC_TRANSPORTER_1"/>
    <property type="match status" value="1"/>
</dbReference>
<dbReference type="PROSITE" id="PS50893">
    <property type="entry name" value="ABC_TRANSPORTER_2"/>
    <property type="match status" value="1"/>
</dbReference>
<dbReference type="PROSITE" id="PS51249">
    <property type="entry name" value="PHNC"/>
    <property type="match status" value="1"/>
</dbReference>